<dbReference type="EC" id="3.6.5.-" evidence="1"/>
<dbReference type="EMBL" id="BA000019">
    <property type="protein sequence ID" value="BAB75438.1"/>
    <property type="molecule type" value="Genomic_DNA"/>
</dbReference>
<dbReference type="PIR" id="AD2273">
    <property type="entry name" value="AD2273"/>
</dbReference>
<dbReference type="SMR" id="Q8YQT0"/>
<dbReference type="STRING" id="103690.gene:10495781"/>
<dbReference type="KEGG" id="ana:alr3739"/>
<dbReference type="eggNOG" id="COG0536">
    <property type="taxonomic scope" value="Bacteria"/>
</dbReference>
<dbReference type="OrthoDB" id="9807318at2"/>
<dbReference type="Proteomes" id="UP000002483">
    <property type="component" value="Chromosome"/>
</dbReference>
<dbReference type="GO" id="GO:0005737">
    <property type="term" value="C:cytoplasm"/>
    <property type="evidence" value="ECO:0007669"/>
    <property type="project" value="UniProtKB-SubCell"/>
</dbReference>
<dbReference type="GO" id="GO:0005525">
    <property type="term" value="F:GTP binding"/>
    <property type="evidence" value="ECO:0007669"/>
    <property type="project" value="UniProtKB-UniRule"/>
</dbReference>
<dbReference type="GO" id="GO:0003924">
    <property type="term" value="F:GTPase activity"/>
    <property type="evidence" value="ECO:0007669"/>
    <property type="project" value="UniProtKB-UniRule"/>
</dbReference>
<dbReference type="GO" id="GO:0000287">
    <property type="term" value="F:magnesium ion binding"/>
    <property type="evidence" value="ECO:0007669"/>
    <property type="project" value="InterPro"/>
</dbReference>
<dbReference type="GO" id="GO:0042254">
    <property type="term" value="P:ribosome biogenesis"/>
    <property type="evidence" value="ECO:0007669"/>
    <property type="project" value="UniProtKB-UniRule"/>
</dbReference>
<dbReference type="CDD" id="cd01898">
    <property type="entry name" value="Obg"/>
    <property type="match status" value="1"/>
</dbReference>
<dbReference type="FunFam" id="2.70.210.12:FF:000001">
    <property type="entry name" value="GTPase Obg"/>
    <property type="match status" value="1"/>
</dbReference>
<dbReference type="Gene3D" id="2.70.210.12">
    <property type="entry name" value="GTP1/OBG domain"/>
    <property type="match status" value="1"/>
</dbReference>
<dbReference type="Gene3D" id="3.40.50.300">
    <property type="entry name" value="P-loop containing nucleotide triphosphate hydrolases"/>
    <property type="match status" value="1"/>
</dbReference>
<dbReference type="HAMAP" id="MF_01454">
    <property type="entry name" value="GTPase_Obg"/>
    <property type="match status" value="1"/>
</dbReference>
<dbReference type="InterPro" id="IPR031167">
    <property type="entry name" value="G_OBG"/>
</dbReference>
<dbReference type="InterPro" id="IPR006073">
    <property type="entry name" value="GTP-bd"/>
</dbReference>
<dbReference type="InterPro" id="IPR014100">
    <property type="entry name" value="GTP-bd_Obg/CgtA"/>
</dbReference>
<dbReference type="InterPro" id="IPR006074">
    <property type="entry name" value="GTP1-OBG_CS"/>
</dbReference>
<dbReference type="InterPro" id="IPR006169">
    <property type="entry name" value="GTP1_OBG_dom"/>
</dbReference>
<dbReference type="InterPro" id="IPR036726">
    <property type="entry name" value="GTP1_OBG_dom_sf"/>
</dbReference>
<dbReference type="InterPro" id="IPR045086">
    <property type="entry name" value="OBG_GTPase"/>
</dbReference>
<dbReference type="InterPro" id="IPR027417">
    <property type="entry name" value="P-loop_NTPase"/>
</dbReference>
<dbReference type="InterPro" id="IPR005225">
    <property type="entry name" value="Small_GTP-bd"/>
</dbReference>
<dbReference type="NCBIfam" id="TIGR02729">
    <property type="entry name" value="Obg_CgtA"/>
    <property type="match status" value="1"/>
</dbReference>
<dbReference type="NCBIfam" id="NF008955">
    <property type="entry name" value="PRK12297.1"/>
    <property type="match status" value="1"/>
</dbReference>
<dbReference type="NCBIfam" id="NF008956">
    <property type="entry name" value="PRK12299.1"/>
    <property type="match status" value="1"/>
</dbReference>
<dbReference type="NCBIfam" id="TIGR00231">
    <property type="entry name" value="small_GTP"/>
    <property type="match status" value="1"/>
</dbReference>
<dbReference type="PANTHER" id="PTHR11702">
    <property type="entry name" value="DEVELOPMENTALLY REGULATED GTP-BINDING PROTEIN-RELATED"/>
    <property type="match status" value="1"/>
</dbReference>
<dbReference type="PANTHER" id="PTHR11702:SF31">
    <property type="entry name" value="MITOCHONDRIAL RIBOSOME-ASSOCIATED GTPASE 2"/>
    <property type="match status" value="1"/>
</dbReference>
<dbReference type="Pfam" id="PF01018">
    <property type="entry name" value="GTP1_OBG"/>
    <property type="match status" value="1"/>
</dbReference>
<dbReference type="Pfam" id="PF01926">
    <property type="entry name" value="MMR_HSR1"/>
    <property type="match status" value="1"/>
</dbReference>
<dbReference type="PIRSF" id="PIRSF002401">
    <property type="entry name" value="GTP_bd_Obg/CgtA"/>
    <property type="match status" value="1"/>
</dbReference>
<dbReference type="PRINTS" id="PR00326">
    <property type="entry name" value="GTP1OBG"/>
</dbReference>
<dbReference type="SUPFAM" id="SSF82051">
    <property type="entry name" value="Obg GTP-binding protein N-terminal domain"/>
    <property type="match status" value="1"/>
</dbReference>
<dbReference type="SUPFAM" id="SSF52540">
    <property type="entry name" value="P-loop containing nucleoside triphosphate hydrolases"/>
    <property type="match status" value="1"/>
</dbReference>
<dbReference type="PROSITE" id="PS51710">
    <property type="entry name" value="G_OBG"/>
    <property type="match status" value="1"/>
</dbReference>
<dbReference type="PROSITE" id="PS00905">
    <property type="entry name" value="GTP1_OBG"/>
    <property type="match status" value="1"/>
</dbReference>
<dbReference type="PROSITE" id="PS51883">
    <property type="entry name" value="OBG"/>
    <property type="match status" value="1"/>
</dbReference>
<organism>
    <name type="scientific">Nostoc sp. (strain PCC 7120 / SAG 25.82 / UTEX 2576)</name>
    <dbReference type="NCBI Taxonomy" id="103690"/>
    <lineage>
        <taxon>Bacteria</taxon>
        <taxon>Bacillati</taxon>
        <taxon>Cyanobacteriota</taxon>
        <taxon>Cyanophyceae</taxon>
        <taxon>Nostocales</taxon>
        <taxon>Nostocaceae</taxon>
        <taxon>Nostoc</taxon>
    </lineage>
</organism>
<gene>
    <name evidence="1" type="primary">obg</name>
    <name type="ordered locus">alr3739</name>
</gene>
<sequence>MQFIDQAQIEVEAGKGGDGIVAFRREKYVPAGGPSGGNGGRGGSVIFVAVENLQTLLDFRYKHIFKADDGGRGGPNNCTGASGKDLIVQVPCGTTIYDAETGDLLGDLTQPNQELIIAAGGKGGLGNQYFLSNRNRAPEYSLPGLPGERKLLRLELKLLAEVGIIGLPNAGKSTLISSLSAARPKIADYPFTTLIPNLGVVRKPTGDGTVFADIPGLIEGAADGAGLGHDFLRHIERTRVLLHLIDATSDDVIRDYNTIEQELQAYGRGLNERMQILALNKIDAVDRETVDLEALAIQLNHLSHAPVFLISAVTRTGLEPMLQEVWGILDQVNALEEAEVFS</sequence>
<accession>Q8YQT0</accession>
<protein>
    <recommendedName>
        <fullName evidence="1">GTPase Obg</fullName>
        <ecNumber evidence="1">3.6.5.-</ecNumber>
    </recommendedName>
    <alternativeName>
        <fullName evidence="1">GTP-binding protein Obg</fullName>
    </alternativeName>
</protein>
<keyword id="KW-0963">Cytoplasm</keyword>
<keyword id="KW-0342">GTP-binding</keyword>
<keyword id="KW-0378">Hydrolase</keyword>
<keyword id="KW-0460">Magnesium</keyword>
<keyword id="KW-0479">Metal-binding</keyword>
<keyword id="KW-0547">Nucleotide-binding</keyword>
<keyword id="KW-1185">Reference proteome</keyword>
<feature type="chain" id="PRO_0000385689" description="GTPase Obg">
    <location>
        <begin position="1"/>
        <end position="342"/>
    </location>
</feature>
<feature type="domain" description="Obg" evidence="2">
    <location>
        <begin position="1"/>
        <end position="159"/>
    </location>
</feature>
<feature type="domain" description="OBG-type G" evidence="1">
    <location>
        <begin position="160"/>
        <end position="330"/>
    </location>
</feature>
<feature type="binding site" evidence="1">
    <location>
        <begin position="166"/>
        <end position="173"/>
    </location>
    <ligand>
        <name>GTP</name>
        <dbReference type="ChEBI" id="CHEBI:37565"/>
    </ligand>
</feature>
<feature type="binding site" evidence="1">
    <location>
        <position position="173"/>
    </location>
    <ligand>
        <name>Mg(2+)</name>
        <dbReference type="ChEBI" id="CHEBI:18420"/>
    </ligand>
</feature>
<feature type="binding site" evidence="1">
    <location>
        <begin position="191"/>
        <end position="195"/>
    </location>
    <ligand>
        <name>GTP</name>
        <dbReference type="ChEBI" id="CHEBI:37565"/>
    </ligand>
</feature>
<feature type="binding site" evidence="1">
    <location>
        <position position="193"/>
    </location>
    <ligand>
        <name>Mg(2+)</name>
        <dbReference type="ChEBI" id="CHEBI:18420"/>
    </ligand>
</feature>
<feature type="binding site" evidence="1">
    <location>
        <begin position="213"/>
        <end position="216"/>
    </location>
    <ligand>
        <name>GTP</name>
        <dbReference type="ChEBI" id="CHEBI:37565"/>
    </ligand>
</feature>
<feature type="binding site" evidence="1">
    <location>
        <begin position="280"/>
        <end position="283"/>
    </location>
    <ligand>
        <name>GTP</name>
        <dbReference type="ChEBI" id="CHEBI:37565"/>
    </ligand>
</feature>
<feature type="binding site" evidence="1">
    <location>
        <begin position="311"/>
        <end position="313"/>
    </location>
    <ligand>
        <name>GTP</name>
        <dbReference type="ChEBI" id="CHEBI:37565"/>
    </ligand>
</feature>
<evidence type="ECO:0000255" key="1">
    <source>
        <dbReference type="HAMAP-Rule" id="MF_01454"/>
    </source>
</evidence>
<evidence type="ECO:0000255" key="2">
    <source>
        <dbReference type="PROSITE-ProRule" id="PRU01231"/>
    </source>
</evidence>
<proteinExistence type="inferred from homology"/>
<reference key="1">
    <citation type="journal article" date="2001" name="DNA Res.">
        <title>Complete genomic sequence of the filamentous nitrogen-fixing cyanobacterium Anabaena sp. strain PCC 7120.</title>
        <authorList>
            <person name="Kaneko T."/>
            <person name="Nakamura Y."/>
            <person name="Wolk C.P."/>
            <person name="Kuritz T."/>
            <person name="Sasamoto S."/>
            <person name="Watanabe A."/>
            <person name="Iriguchi M."/>
            <person name="Ishikawa A."/>
            <person name="Kawashima K."/>
            <person name="Kimura T."/>
            <person name="Kishida Y."/>
            <person name="Kohara M."/>
            <person name="Matsumoto M."/>
            <person name="Matsuno A."/>
            <person name="Muraki A."/>
            <person name="Nakazaki N."/>
            <person name="Shimpo S."/>
            <person name="Sugimoto M."/>
            <person name="Takazawa M."/>
            <person name="Yamada M."/>
            <person name="Yasuda M."/>
            <person name="Tabata S."/>
        </authorList>
    </citation>
    <scope>NUCLEOTIDE SEQUENCE [LARGE SCALE GENOMIC DNA]</scope>
    <source>
        <strain>PCC 7120 / SAG 25.82 / UTEX 2576</strain>
    </source>
</reference>
<name>OBG_NOSS1</name>
<comment type="function">
    <text evidence="1">An essential GTPase which binds GTP, GDP and possibly (p)ppGpp with moderate affinity, with high nucleotide exchange rates and a fairly low GTP hydrolysis rate. Plays a role in control of the cell cycle, stress response, ribosome biogenesis and in those bacteria that undergo differentiation, in morphogenesis control.</text>
</comment>
<comment type="cofactor">
    <cofactor evidence="1">
        <name>Mg(2+)</name>
        <dbReference type="ChEBI" id="CHEBI:18420"/>
    </cofactor>
</comment>
<comment type="subunit">
    <text evidence="1">Monomer.</text>
</comment>
<comment type="subcellular location">
    <subcellularLocation>
        <location evidence="1">Cytoplasm</location>
    </subcellularLocation>
</comment>
<comment type="similarity">
    <text evidence="1">Belongs to the TRAFAC class OBG-HflX-like GTPase superfamily. OBG GTPase family.</text>
</comment>